<reference key="1">
    <citation type="journal article" date="2008" name="Genome Res.">
        <title>Comparative genome analysis of Salmonella enteritidis PT4 and Salmonella gallinarum 287/91 provides insights into evolutionary and host adaptation pathways.</title>
        <authorList>
            <person name="Thomson N.R."/>
            <person name="Clayton D.J."/>
            <person name="Windhorst D."/>
            <person name="Vernikos G."/>
            <person name="Davidson S."/>
            <person name="Churcher C."/>
            <person name="Quail M.A."/>
            <person name="Stevens M."/>
            <person name="Jones M.A."/>
            <person name="Watson M."/>
            <person name="Barron A."/>
            <person name="Layton A."/>
            <person name="Pickard D."/>
            <person name="Kingsley R.A."/>
            <person name="Bignell A."/>
            <person name="Clark L."/>
            <person name="Harris B."/>
            <person name="Ormond D."/>
            <person name="Abdellah Z."/>
            <person name="Brooks K."/>
            <person name="Cherevach I."/>
            <person name="Chillingworth T."/>
            <person name="Woodward J."/>
            <person name="Norberczak H."/>
            <person name="Lord A."/>
            <person name="Arrowsmith C."/>
            <person name="Jagels K."/>
            <person name="Moule S."/>
            <person name="Mungall K."/>
            <person name="Saunders M."/>
            <person name="Whitehead S."/>
            <person name="Chabalgoity J.A."/>
            <person name="Maskell D."/>
            <person name="Humphreys T."/>
            <person name="Roberts M."/>
            <person name="Barrow P.A."/>
            <person name="Dougan G."/>
            <person name="Parkhill J."/>
        </authorList>
    </citation>
    <scope>NUCLEOTIDE SEQUENCE [LARGE SCALE GENOMIC DNA]</scope>
    <source>
        <strain>P125109</strain>
    </source>
</reference>
<feature type="chain" id="PRO_1000191539" description="Na(+)/H(+) antiporter NhaB">
    <location>
        <begin position="1"/>
        <end position="514"/>
    </location>
</feature>
<feature type="transmembrane region" description="Helical" evidence="1">
    <location>
        <begin position="23"/>
        <end position="43"/>
    </location>
</feature>
<feature type="transmembrane region" description="Helical" evidence="1">
    <location>
        <begin position="63"/>
        <end position="83"/>
    </location>
</feature>
<feature type="transmembrane region" description="Helical" evidence="1">
    <location>
        <begin position="97"/>
        <end position="117"/>
    </location>
</feature>
<feature type="transmembrane region" description="Helical" evidence="1">
    <location>
        <begin position="120"/>
        <end position="140"/>
    </location>
</feature>
<feature type="transmembrane region" description="Helical" evidence="1">
    <location>
        <begin position="144"/>
        <end position="164"/>
    </location>
</feature>
<feature type="transmembrane region" description="Helical" evidence="1">
    <location>
        <begin position="202"/>
        <end position="222"/>
    </location>
</feature>
<feature type="transmembrane region" description="Helical" evidence="1">
    <location>
        <begin position="238"/>
        <end position="258"/>
    </location>
</feature>
<feature type="transmembrane region" description="Helical" evidence="1">
    <location>
        <begin position="303"/>
        <end position="323"/>
    </location>
</feature>
<feature type="transmembrane region" description="Helical" evidence="1">
    <location>
        <begin position="357"/>
        <end position="377"/>
    </location>
</feature>
<feature type="transmembrane region" description="Helical" evidence="1">
    <location>
        <begin position="391"/>
        <end position="411"/>
    </location>
</feature>
<feature type="transmembrane region" description="Helical" evidence="1">
    <location>
        <begin position="447"/>
        <end position="467"/>
    </location>
</feature>
<feature type="transmembrane region" description="Helical" evidence="1">
    <location>
        <begin position="475"/>
        <end position="495"/>
    </location>
</feature>
<organism>
    <name type="scientific">Salmonella enteritidis PT4 (strain P125109)</name>
    <dbReference type="NCBI Taxonomy" id="550537"/>
    <lineage>
        <taxon>Bacteria</taxon>
        <taxon>Pseudomonadati</taxon>
        <taxon>Pseudomonadota</taxon>
        <taxon>Gammaproteobacteria</taxon>
        <taxon>Enterobacterales</taxon>
        <taxon>Enterobacteriaceae</taxon>
        <taxon>Salmonella</taxon>
    </lineage>
</organism>
<name>NHAB_SALEP</name>
<dbReference type="EMBL" id="AM933172">
    <property type="protein sequence ID" value="CAR32811.1"/>
    <property type="molecule type" value="Genomic_DNA"/>
</dbReference>
<dbReference type="RefSeq" id="WP_000406438.1">
    <property type="nucleotide sequence ID" value="NC_011294.1"/>
</dbReference>
<dbReference type="SMR" id="B5R2W4"/>
<dbReference type="KEGG" id="set:SEN1231"/>
<dbReference type="HOGENOM" id="CLU_041110_0_0_6"/>
<dbReference type="Proteomes" id="UP000000613">
    <property type="component" value="Chromosome"/>
</dbReference>
<dbReference type="GO" id="GO:0005886">
    <property type="term" value="C:plasma membrane"/>
    <property type="evidence" value="ECO:0007669"/>
    <property type="project" value="UniProtKB-SubCell"/>
</dbReference>
<dbReference type="GO" id="GO:0015385">
    <property type="term" value="F:sodium:proton antiporter activity"/>
    <property type="evidence" value="ECO:0007669"/>
    <property type="project" value="InterPro"/>
</dbReference>
<dbReference type="HAMAP" id="MF_01599">
    <property type="entry name" value="NhaB"/>
    <property type="match status" value="1"/>
</dbReference>
<dbReference type="InterPro" id="IPR004671">
    <property type="entry name" value="Na+/H+_antiporter_NhaB"/>
</dbReference>
<dbReference type="NCBIfam" id="TIGR00774">
    <property type="entry name" value="NhaB"/>
    <property type="match status" value="1"/>
</dbReference>
<dbReference type="NCBIfam" id="NF007093">
    <property type="entry name" value="PRK09547.1"/>
    <property type="match status" value="1"/>
</dbReference>
<dbReference type="PANTHER" id="PTHR43302:SF1">
    <property type="entry name" value="NA(+)_H(+) ANTIPORTER NHAB"/>
    <property type="match status" value="1"/>
</dbReference>
<dbReference type="PANTHER" id="PTHR43302">
    <property type="entry name" value="TRANSPORTER ARSB-RELATED"/>
    <property type="match status" value="1"/>
</dbReference>
<dbReference type="Pfam" id="PF06450">
    <property type="entry name" value="NhaB"/>
    <property type="match status" value="1"/>
</dbReference>
<protein>
    <recommendedName>
        <fullName evidence="1">Na(+)/H(+) antiporter NhaB</fullName>
    </recommendedName>
    <alternativeName>
        <fullName evidence="1">Sodium/proton antiporter NhaB</fullName>
    </alternativeName>
</protein>
<comment type="function">
    <text evidence="1">Na(+)/H(+) antiporter that extrudes sodium in exchange for external protons.</text>
</comment>
<comment type="catalytic activity">
    <reaction evidence="1">
        <text>2 Na(+)(in) + 3 H(+)(out) = 2 Na(+)(out) + 3 H(+)(in)</text>
        <dbReference type="Rhea" id="RHEA:29247"/>
        <dbReference type="ChEBI" id="CHEBI:15378"/>
        <dbReference type="ChEBI" id="CHEBI:29101"/>
    </reaction>
    <physiologicalReaction direction="left-to-right" evidence="1">
        <dbReference type="Rhea" id="RHEA:29248"/>
    </physiologicalReaction>
</comment>
<comment type="subcellular location">
    <subcellularLocation>
        <location evidence="1">Cell inner membrane</location>
        <topology evidence="1">Multi-pass membrane protein</topology>
    </subcellularLocation>
</comment>
<comment type="similarity">
    <text evidence="1">Belongs to the NhaB Na(+)/H(+) (TC 2.A.34) antiporter family.</text>
</comment>
<evidence type="ECO:0000255" key="1">
    <source>
        <dbReference type="HAMAP-Rule" id="MF_01599"/>
    </source>
</evidence>
<gene>
    <name evidence="1" type="primary">nhaB</name>
    <name type="ordered locus">SEN1231</name>
</gene>
<proteinExistence type="inferred from homology"/>
<accession>B5R2W4</accession>
<sequence length="514" mass="56526">MEISWGRAMWRNFLGQSPDWYKLALLVFLIVNPFIFLANPFIAGWLLVAEFIFTLAMALKCYPLLPGGLLAIEAVIIGMTSAAHVREEVAANLEVLLLLMFMVAGIYFMKQLLLFIFTRLLLSIRSKMVLSLAFCVAAAFLSAFLDALTVVAVVISVAVGFYGIYHRVASSRGEENDMLDDSHIDPHYKTVLEQFRGFLRSLMMHAGVGTALGGVMTMVGEPQNLIIAKAAGWHFGDFFLRMSPVTVPVLVCGLLTCMLVEKMRWFGYGETLPEKVRDVLQQFDDQSRKKRTRQDKIKLIVQAVIGVWLVTALALHLAEVGLIGLSVIILATALTGVTDEHAIGKAFTESLPFTALLTVFFSIVAVIIDQHLFAPIIQFVLQASEHAQLTLFYLFNGLLSSISDNVFVGTIYINEAKAAMENGAISLKQFELLAVAINTGTNLPSVATPNGQAAFLFLLTSALAPLIRLSYGRMVWMALPYTIVLTLIGLLCVEFTLAPATEWMTQAGWLATLS</sequence>
<keyword id="KW-0050">Antiport</keyword>
<keyword id="KW-0997">Cell inner membrane</keyword>
<keyword id="KW-1003">Cell membrane</keyword>
<keyword id="KW-0406">Ion transport</keyword>
<keyword id="KW-0472">Membrane</keyword>
<keyword id="KW-0915">Sodium</keyword>
<keyword id="KW-0739">Sodium transport</keyword>
<keyword id="KW-0812">Transmembrane</keyword>
<keyword id="KW-1133">Transmembrane helix</keyword>
<keyword id="KW-0813">Transport</keyword>